<gene>
    <name evidence="1" type="primary">rpl11</name>
    <name type="ordered locus">UNCMA_00250</name>
    <name type="ORF">LRC27</name>
</gene>
<feature type="chain" id="PRO_1000046289" description="Large ribosomal subunit protein uL11">
    <location>
        <begin position="1"/>
        <end position="158"/>
    </location>
</feature>
<accession>Q0W049</accession>
<comment type="function">
    <text evidence="1">Forms part of the ribosomal stalk which helps the ribosome interact with GTP-bound translation factors.</text>
</comment>
<comment type="subunit">
    <text evidence="1">Part of the ribosomal stalk of the 50S ribosomal subunit. Interacts with L10 and the large rRNA to form the base of the stalk. L10 forms an elongated spine to which L12 dimers bind in a sequential fashion forming a multimeric L10(L12)X complex.</text>
</comment>
<comment type="similarity">
    <text evidence="1">Belongs to the universal ribosomal protein uL11 family.</text>
</comment>
<organism>
    <name type="scientific">Methanocella arvoryzae (strain DSM 22066 / NBRC 105507 / MRE50)</name>
    <dbReference type="NCBI Taxonomy" id="351160"/>
    <lineage>
        <taxon>Archaea</taxon>
        <taxon>Methanobacteriati</taxon>
        <taxon>Methanobacteriota</taxon>
        <taxon>Stenosarchaea group</taxon>
        <taxon>Methanomicrobia</taxon>
        <taxon>Methanocellales</taxon>
        <taxon>Methanocellaceae</taxon>
        <taxon>Methanocella</taxon>
    </lineage>
</organism>
<keyword id="KW-1185">Reference proteome</keyword>
<keyword id="KW-0687">Ribonucleoprotein</keyword>
<keyword id="KW-0689">Ribosomal protein</keyword>
<keyword id="KW-0694">RNA-binding</keyword>
<keyword id="KW-0699">rRNA-binding</keyword>
<name>RL11_METAR</name>
<protein>
    <recommendedName>
        <fullName evidence="1">Large ribosomal subunit protein uL11</fullName>
    </recommendedName>
    <alternativeName>
        <fullName evidence="2">50S ribosomal protein L11</fullName>
    </alternativeName>
</protein>
<dbReference type="EMBL" id="AM114193">
    <property type="protein sequence ID" value="CAJ38244.1"/>
    <property type="molecule type" value="Genomic_DNA"/>
</dbReference>
<dbReference type="RefSeq" id="WP_012034350.1">
    <property type="nucleotide sequence ID" value="NC_009464.1"/>
</dbReference>
<dbReference type="SMR" id="Q0W049"/>
<dbReference type="STRING" id="351160.LRC27"/>
<dbReference type="GeneID" id="5144564"/>
<dbReference type="KEGG" id="rci:LRC27"/>
<dbReference type="PATRIC" id="fig|351160.9.peg.24"/>
<dbReference type="eggNOG" id="arCOG04372">
    <property type="taxonomic scope" value="Archaea"/>
</dbReference>
<dbReference type="OrthoDB" id="8842at2157"/>
<dbReference type="Proteomes" id="UP000000663">
    <property type="component" value="Chromosome"/>
</dbReference>
<dbReference type="GO" id="GO:0015934">
    <property type="term" value="C:large ribosomal subunit"/>
    <property type="evidence" value="ECO:0007669"/>
    <property type="project" value="TreeGrafter"/>
</dbReference>
<dbReference type="GO" id="GO:0070180">
    <property type="term" value="F:large ribosomal subunit rRNA binding"/>
    <property type="evidence" value="ECO:0007669"/>
    <property type="project" value="UniProtKB-UniRule"/>
</dbReference>
<dbReference type="GO" id="GO:0003735">
    <property type="term" value="F:structural constituent of ribosome"/>
    <property type="evidence" value="ECO:0007669"/>
    <property type="project" value="InterPro"/>
</dbReference>
<dbReference type="GO" id="GO:0006412">
    <property type="term" value="P:translation"/>
    <property type="evidence" value="ECO:0007669"/>
    <property type="project" value="UniProtKB-UniRule"/>
</dbReference>
<dbReference type="CDD" id="cd00349">
    <property type="entry name" value="Ribosomal_L11"/>
    <property type="match status" value="1"/>
</dbReference>
<dbReference type="FunFam" id="3.30.1550.10:FF:000007">
    <property type="entry name" value="50S ribosomal protein L11"/>
    <property type="match status" value="1"/>
</dbReference>
<dbReference type="Gene3D" id="1.10.10.250">
    <property type="entry name" value="Ribosomal protein L11, C-terminal domain"/>
    <property type="match status" value="1"/>
</dbReference>
<dbReference type="Gene3D" id="3.30.1550.10">
    <property type="entry name" value="Ribosomal protein L11/L12, N-terminal domain"/>
    <property type="match status" value="1"/>
</dbReference>
<dbReference type="HAMAP" id="MF_00736">
    <property type="entry name" value="Ribosomal_uL11"/>
    <property type="match status" value="1"/>
</dbReference>
<dbReference type="InterPro" id="IPR000911">
    <property type="entry name" value="Ribosomal_uL11"/>
</dbReference>
<dbReference type="InterPro" id="IPR020783">
    <property type="entry name" value="Ribosomal_uL11_C"/>
</dbReference>
<dbReference type="InterPro" id="IPR036769">
    <property type="entry name" value="Ribosomal_uL11_C_sf"/>
</dbReference>
<dbReference type="InterPro" id="IPR020784">
    <property type="entry name" value="Ribosomal_uL11_N"/>
</dbReference>
<dbReference type="InterPro" id="IPR036796">
    <property type="entry name" value="Ribosomal_uL11_N_sf"/>
</dbReference>
<dbReference type="NCBIfam" id="NF002232">
    <property type="entry name" value="PRK01143.1"/>
    <property type="match status" value="1"/>
</dbReference>
<dbReference type="PANTHER" id="PTHR11661">
    <property type="entry name" value="60S RIBOSOMAL PROTEIN L12"/>
    <property type="match status" value="1"/>
</dbReference>
<dbReference type="PANTHER" id="PTHR11661:SF1">
    <property type="entry name" value="LARGE RIBOSOMAL SUBUNIT PROTEIN UL11M"/>
    <property type="match status" value="1"/>
</dbReference>
<dbReference type="Pfam" id="PF00298">
    <property type="entry name" value="Ribosomal_L11"/>
    <property type="match status" value="1"/>
</dbReference>
<dbReference type="Pfam" id="PF03946">
    <property type="entry name" value="Ribosomal_L11_N"/>
    <property type="match status" value="1"/>
</dbReference>
<dbReference type="SMART" id="SM00649">
    <property type="entry name" value="RL11"/>
    <property type="match status" value="1"/>
</dbReference>
<dbReference type="SUPFAM" id="SSF54747">
    <property type="entry name" value="Ribosomal L11/L12e N-terminal domain"/>
    <property type="match status" value="1"/>
</dbReference>
<dbReference type="SUPFAM" id="SSF46906">
    <property type="entry name" value="Ribosomal protein L11, C-terminal domain"/>
    <property type="match status" value="1"/>
</dbReference>
<reference key="1">
    <citation type="journal article" date="2006" name="Science">
        <title>Genome of rice cluster I archaea -- the key methane producers in the rice rhizosphere.</title>
        <authorList>
            <person name="Erkel C."/>
            <person name="Kube M."/>
            <person name="Reinhardt R."/>
            <person name="Liesack W."/>
        </authorList>
    </citation>
    <scope>NUCLEOTIDE SEQUENCE [LARGE SCALE GENOMIC DNA]</scope>
    <source>
        <strain>DSM 22066 / NBRC 105507 / MRE50</strain>
    </source>
</reference>
<proteinExistence type="inferred from homology"/>
<evidence type="ECO:0000255" key="1">
    <source>
        <dbReference type="HAMAP-Rule" id="MF_00736"/>
    </source>
</evidence>
<evidence type="ECO:0000305" key="2"/>
<sequence>MADVVEVLVPGGKANPGPPLGPALGPLGINIKKVVDEINNKTKDYNGMTVPVKVIVDASRNFTVEVGTPPTSALVLSELKLEKGSGTPNTNFIGSLTIEQAIKVAQMKRDAMLSYTLKNAVKEVAGTCVSLGVMIEGKKPKEFIAEVNAGKYDDKLSE</sequence>